<evidence type="ECO:0000255" key="1">
    <source>
        <dbReference type="HAMAP-Rule" id="MF_00009"/>
    </source>
</evidence>
<feature type="chain" id="PRO_1000000719" description="Endoribonuclease YbeY">
    <location>
        <begin position="1"/>
        <end position="196"/>
    </location>
</feature>
<feature type="binding site" evidence="1">
    <location>
        <position position="120"/>
    </location>
    <ligand>
        <name>Zn(2+)</name>
        <dbReference type="ChEBI" id="CHEBI:29105"/>
        <note>catalytic</note>
    </ligand>
</feature>
<feature type="binding site" evidence="1">
    <location>
        <position position="124"/>
    </location>
    <ligand>
        <name>Zn(2+)</name>
        <dbReference type="ChEBI" id="CHEBI:29105"/>
        <note>catalytic</note>
    </ligand>
</feature>
<feature type="binding site" evidence="1">
    <location>
        <position position="130"/>
    </location>
    <ligand>
        <name>Zn(2+)</name>
        <dbReference type="ChEBI" id="CHEBI:29105"/>
        <note>catalytic</note>
    </ligand>
</feature>
<sequence length="196" mass="21242">MSIEVFNESGYDGVNEEMLIDVLSFALGEMDIHPDAEASIHIVDLDTIADLHVKWLDLEGPTDVMSFPMDELTPGYSRPDGATPGPAMLGDIVLCPEFAAKQATKAGHDLAHELALLTVHGSLHLLGYDHVDPAEEREMFALQNELLADWYDNVEARGVTYQPKPSGAGAFPTAADRLELDEKMEADDSGFGGVES</sequence>
<reference key="1">
    <citation type="journal article" date="2007" name="Microbiology">
        <title>Comparative analysis of the Corynebacterium glutamicum group and complete genome sequence of strain R.</title>
        <authorList>
            <person name="Yukawa H."/>
            <person name="Omumasaba C.A."/>
            <person name="Nonaka H."/>
            <person name="Kos P."/>
            <person name="Okai N."/>
            <person name="Suzuki N."/>
            <person name="Suda M."/>
            <person name="Tsuge Y."/>
            <person name="Watanabe J."/>
            <person name="Ikeda Y."/>
            <person name="Vertes A.A."/>
            <person name="Inui M."/>
        </authorList>
    </citation>
    <scope>NUCLEOTIDE SEQUENCE [LARGE SCALE GENOMIC DNA]</scope>
    <source>
        <strain>R</strain>
    </source>
</reference>
<keyword id="KW-0963">Cytoplasm</keyword>
<keyword id="KW-0255">Endonuclease</keyword>
<keyword id="KW-0378">Hydrolase</keyword>
<keyword id="KW-0479">Metal-binding</keyword>
<keyword id="KW-0540">Nuclease</keyword>
<keyword id="KW-0690">Ribosome biogenesis</keyword>
<keyword id="KW-0698">rRNA processing</keyword>
<keyword id="KW-0862">Zinc</keyword>
<gene>
    <name evidence="1" type="primary">ybeY</name>
    <name type="ordered locus">cgR_2159</name>
</gene>
<comment type="function">
    <text evidence="1">Single strand-specific metallo-endoribonuclease involved in late-stage 70S ribosome quality control and in maturation of the 3' terminus of the 16S rRNA.</text>
</comment>
<comment type="cofactor">
    <cofactor evidence="1">
        <name>Zn(2+)</name>
        <dbReference type="ChEBI" id="CHEBI:29105"/>
    </cofactor>
    <text evidence="1">Binds 1 zinc ion.</text>
</comment>
<comment type="subcellular location">
    <subcellularLocation>
        <location evidence="1">Cytoplasm</location>
    </subcellularLocation>
</comment>
<comment type="similarity">
    <text evidence="1">Belongs to the endoribonuclease YbeY family.</text>
</comment>
<protein>
    <recommendedName>
        <fullName evidence="1">Endoribonuclease YbeY</fullName>
        <ecNumber evidence="1">3.1.-.-</ecNumber>
    </recommendedName>
</protein>
<name>YBEY_CORGB</name>
<accession>A4QFZ5</accession>
<organism>
    <name type="scientific">Corynebacterium glutamicum (strain R)</name>
    <dbReference type="NCBI Taxonomy" id="340322"/>
    <lineage>
        <taxon>Bacteria</taxon>
        <taxon>Bacillati</taxon>
        <taxon>Actinomycetota</taxon>
        <taxon>Actinomycetes</taxon>
        <taxon>Mycobacteriales</taxon>
        <taxon>Corynebacteriaceae</taxon>
        <taxon>Corynebacterium</taxon>
    </lineage>
</organism>
<dbReference type="EC" id="3.1.-.-" evidence="1"/>
<dbReference type="EMBL" id="AP009044">
    <property type="protein sequence ID" value="BAF55161.1"/>
    <property type="molecule type" value="Genomic_DNA"/>
</dbReference>
<dbReference type="RefSeq" id="WP_003859457.1">
    <property type="nucleotide sequence ID" value="NC_009342.1"/>
</dbReference>
<dbReference type="SMR" id="A4QFZ5"/>
<dbReference type="KEGG" id="cgt:cgR_2159"/>
<dbReference type="HOGENOM" id="CLU_106710_3_2_11"/>
<dbReference type="PhylomeDB" id="A4QFZ5"/>
<dbReference type="Proteomes" id="UP000006698">
    <property type="component" value="Chromosome"/>
</dbReference>
<dbReference type="GO" id="GO:0005737">
    <property type="term" value="C:cytoplasm"/>
    <property type="evidence" value="ECO:0007669"/>
    <property type="project" value="UniProtKB-SubCell"/>
</dbReference>
<dbReference type="GO" id="GO:0004222">
    <property type="term" value="F:metalloendopeptidase activity"/>
    <property type="evidence" value="ECO:0007669"/>
    <property type="project" value="InterPro"/>
</dbReference>
<dbReference type="GO" id="GO:0004521">
    <property type="term" value="F:RNA endonuclease activity"/>
    <property type="evidence" value="ECO:0007669"/>
    <property type="project" value="UniProtKB-UniRule"/>
</dbReference>
<dbReference type="GO" id="GO:0008270">
    <property type="term" value="F:zinc ion binding"/>
    <property type="evidence" value="ECO:0007669"/>
    <property type="project" value="UniProtKB-UniRule"/>
</dbReference>
<dbReference type="GO" id="GO:0006364">
    <property type="term" value="P:rRNA processing"/>
    <property type="evidence" value="ECO:0007669"/>
    <property type="project" value="UniProtKB-UniRule"/>
</dbReference>
<dbReference type="Gene3D" id="3.40.390.30">
    <property type="entry name" value="Metalloproteases ('zincins'), catalytic domain"/>
    <property type="match status" value="1"/>
</dbReference>
<dbReference type="HAMAP" id="MF_00009">
    <property type="entry name" value="Endoribonucl_YbeY"/>
    <property type="match status" value="1"/>
</dbReference>
<dbReference type="InterPro" id="IPR023091">
    <property type="entry name" value="MetalPrtase_cat_dom_sf_prd"/>
</dbReference>
<dbReference type="InterPro" id="IPR002036">
    <property type="entry name" value="YbeY"/>
</dbReference>
<dbReference type="InterPro" id="IPR020549">
    <property type="entry name" value="YbeY_CS"/>
</dbReference>
<dbReference type="NCBIfam" id="TIGR00043">
    <property type="entry name" value="rRNA maturation RNase YbeY"/>
    <property type="match status" value="1"/>
</dbReference>
<dbReference type="PANTHER" id="PTHR46986">
    <property type="entry name" value="ENDORIBONUCLEASE YBEY, CHLOROPLASTIC"/>
    <property type="match status" value="1"/>
</dbReference>
<dbReference type="PANTHER" id="PTHR46986:SF1">
    <property type="entry name" value="ENDORIBONUCLEASE YBEY, CHLOROPLASTIC"/>
    <property type="match status" value="1"/>
</dbReference>
<dbReference type="Pfam" id="PF02130">
    <property type="entry name" value="YbeY"/>
    <property type="match status" value="1"/>
</dbReference>
<dbReference type="SUPFAM" id="SSF55486">
    <property type="entry name" value="Metalloproteases ('zincins'), catalytic domain"/>
    <property type="match status" value="1"/>
</dbReference>
<dbReference type="PROSITE" id="PS01306">
    <property type="entry name" value="UPF0054"/>
    <property type="match status" value="1"/>
</dbReference>
<proteinExistence type="inferred from homology"/>